<protein>
    <recommendedName>
        <fullName>Golgin subfamily A member 7</fullName>
    </recommendedName>
</protein>
<feature type="chain" id="PRO_0000213980" description="Golgin subfamily A member 7">
    <location>
        <begin position="1"/>
        <end position="137"/>
    </location>
</feature>
<feature type="lipid moiety-binding region" description="S-palmitoyl cysteine" evidence="1">
    <location>
        <position position="69"/>
    </location>
</feature>
<feature type="lipid moiety-binding region" description="S-palmitoyl cysteine" evidence="1">
    <location>
        <position position="72"/>
    </location>
</feature>
<evidence type="ECO:0000250" key="1"/>
<evidence type="ECO:0000305" key="2"/>
<sequence>MRPQQAPVSGKVFIQRDYSGGTRCQFQSKFPAELENRIDRQQFEETVRTLNNLYAEAEKLGGQSYLEGCLACLTAYTIFLCMETHYEKVLKKIAKFIQEQNEKIYAPQGLLLTDPIERGLRVIEITIYEDRGMSSGR</sequence>
<proteinExistence type="evidence at transcript level"/>
<reference key="1">
    <citation type="journal article" date="2005" name="Genome Biol.">
        <title>Full-length cDNAs from chicken bursal lymphocytes to facilitate gene function analysis.</title>
        <authorList>
            <person name="Caldwell R.B."/>
            <person name="Kierzek A.M."/>
            <person name="Arakawa H."/>
            <person name="Bezzubov Y."/>
            <person name="Zaim J."/>
            <person name="Fiedler P."/>
            <person name="Kutter S."/>
            <person name="Blagodatski A."/>
            <person name="Kostovska D."/>
            <person name="Koter M."/>
            <person name="Plachy J."/>
            <person name="Carninci P."/>
            <person name="Hayashizaki Y."/>
            <person name="Buerstedde J.-M."/>
        </authorList>
    </citation>
    <scope>NUCLEOTIDE SEQUENCE [LARGE SCALE MRNA]</scope>
    <source>
        <strain>CB</strain>
        <tissue>Bursa of Fabricius</tissue>
    </source>
</reference>
<name>GOGA7_CHICK</name>
<accession>Q5ZLC9</accession>
<comment type="function">
    <text evidence="1">May be involved in protein transport from Golgi to cell surface. The ZDHHC9-GOLGA7 complex is a palmitoyltransferase specific for HRAS and NRAS (By similarity).</text>
</comment>
<comment type="subunit">
    <text evidence="1">Interacts with ZDHHC9.</text>
</comment>
<comment type="subcellular location">
    <subcellularLocation>
        <location evidence="1">Golgi apparatus membrane</location>
        <topology evidence="1">Lipid-anchor</topology>
    </subcellularLocation>
</comment>
<comment type="similarity">
    <text evidence="2">Belongs to the ERF4 family.</text>
</comment>
<gene>
    <name type="primary">GOLGA7</name>
    <name type="ORF">RCJMB04_6k22</name>
</gene>
<organism>
    <name type="scientific">Gallus gallus</name>
    <name type="common">Chicken</name>
    <dbReference type="NCBI Taxonomy" id="9031"/>
    <lineage>
        <taxon>Eukaryota</taxon>
        <taxon>Metazoa</taxon>
        <taxon>Chordata</taxon>
        <taxon>Craniata</taxon>
        <taxon>Vertebrata</taxon>
        <taxon>Euteleostomi</taxon>
        <taxon>Archelosauria</taxon>
        <taxon>Archosauria</taxon>
        <taxon>Dinosauria</taxon>
        <taxon>Saurischia</taxon>
        <taxon>Theropoda</taxon>
        <taxon>Coelurosauria</taxon>
        <taxon>Aves</taxon>
        <taxon>Neognathae</taxon>
        <taxon>Galloanserae</taxon>
        <taxon>Galliformes</taxon>
        <taxon>Phasianidae</taxon>
        <taxon>Phasianinae</taxon>
        <taxon>Gallus</taxon>
    </lineage>
</organism>
<dbReference type="EMBL" id="AJ719805">
    <property type="protein sequence ID" value="CAG31464.1"/>
    <property type="molecule type" value="mRNA"/>
</dbReference>
<dbReference type="RefSeq" id="NP_001006570.1">
    <property type="nucleotide sequence ID" value="NM_001006570.2"/>
</dbReference>
<dbReference type="RefSeq" id="XP_015152856.1">
    <property type="nucleotide sequence ID" value="XM_015297370.1"/>
</dbReference>
<dbReference type="RefSeq" id="XP_040507413.1">
    <property type="nucleotide sequence ID" value="XM_040651479.2"/>
</dbReference>
<dbReference type="RefSeq" id="XP_046787590.1">
    <property type="nucleotide sequence ID" value="XM_046931634.1"/>
</dbReference>
<dbReference type="SMR" id="Q5ZLC9"/>
<dbReference type="FunCoup" id="Q5ZLC9">
    <property type="interactions" value="1810"/>
</dbReference>
<dbReference type="STRING" id="9031.ENSGALP00000005501"/>
<dbReference type="PaxDb" id="9031-ENSGALP00000005501"/>
<dbReference type="Ensembl" id="ENSGALT00010043679.1">
    <property type="protein sequence ID" value="ENSGALP00010025990.1"/>
    <property type="gene ID" value="ENSGALG00010018062.1"/>
</dbReference>
<dbReference type="GeneID" id="426787"/>
<dbReference type="KEGG" id="gga:426787"/>
<dbReference type="CTD" id="51125"/>
<dbReference type="VEuPathDB" id="HostDB:geneid_426787"/>
<dbReference type="eggNOG" id="KOG4069">
    <property type="taxonomic scope" value="Eukaryota"/>
</dbReference>
<dbReference type="GeneTree" id="ENSGT00390000000134"/>
<dbReference type="HOGENOM" id="CLU_130071_0_1_1"/>
<dbReference type="InParanoid" id="Q5ZLC9"/>
<dbReference type="OMA" id="CEMRPQQ"/>
<dbReference type="OrthoDB" id="2190159at2759"/>
<dbReference type="PhylomeDB" id="Q5ZLC9"/>
<dbReference type="TreeFam" id="TF313115"/>
<dbReference type="PRO" id="PR:Q5ZLC9"/>
<dbReference type="Proteomes" id="UP000000539">
    <property type="component" value="Chromosome 22"/>
</dbReference>
<dbReference type="GO" id="GO:0000139">
    <property type="term" value="C:Golgi membrane"/>
    <property type="evidence" value="ECO:0000250"/>
    <property type="project" value="CAFA"/>
</dbReference>
<dbReference type="GO" id="GO:0005795">
    <property type="term" value="C:Golgi stack"/>
    <property type="evidence" value="ECO:0000250"/>
    <property type="project" value="CAFA"/>
</dbReference>
<dbReference type="GO" id="GO:0002178">
    <property type="term" value="C:palmitoyltransferase complex"/>
    <property type="evidence" value="ECO:0000250"/>
    <property type="project" value="CAFA"/>
</dbReference>
<dbReference type="GO" id="GO:0043001">
    <property type="term" value="P:Golgi to plasma membrane protein transport"/>
    <property type="evidence" value="ECO:0000250"/>
    <property type="project" value="CAFA"/>
</dbReference>
<dbReference type="GO" id="GO:0018230">
    <property type="term" value="P:peptidyl-L-cysteine S-palmitoylation"/>
    <property type="evidence" value="ECO:0000250"/>
    <property type="project" value="CAFA"/>
</dbReference>
<dbReference type="GO" id="GO:0050821">
    <property type="term" value="P:protein stabilization"/>
    <property type="evidence" value="ECO:0000250"/>
    <property type="project" value="CAFA"/>
</dbReference>
<dbReference type="GO" id="GO:0006612">
    <property type="term" value="P:protein targeting to membrane"/>
    <property type="evidence" value="ECO:0000318"/>
    <property type="project" value="GO_Central"/>
</dbReference>
<dbReference type="InterPro" id="IPR019383">
    <property type="entry name" value="Golgin_A_7/ERF4"/>
</dbReference>
<dbReference type="InterPro" id="IPR051371">
    <property type="entry name" value="Ras_palmitoyltransferase"/>
</dbReference>
<dbReference type="PANTHER" id="PTHR13254">
    <property type="entry name" value="GOLGI AUTOANTIGEN, GOLGIN SUBFAMILY A, 7"/>
    <property type="match status" value="1"/>
</dbReference>
<dbReference type="PANTHER" id="PTHR13254:SF1">
    <property type="entry name" value="GOLGIN SUBFAMILY A MEMBER 7"/>
    <property type="match status" value="1"/>
</dbReference>
<dbReference type="Pfam" id="PF10256">
    <property type="entry name" value="Erf4"/>
    <property type="match status" value="1"/>
</dbReference>
<keyword id="KW-0333">Golgi apparatus</keyword>
<keyword id="KW-0449">Lipoprotein</keyword>
<keyword id="KW-0472">Membrane</keyword>
<keyword id="KW-0564">Palmitate</keyword>
<keyword id="KW-1185">Reference proteome</keyword>